<name>MYG1_STEAT</name>
<dbReference type="EC" id="1.7.-.-" evidence="1"/>
<dbReference type="EC" id="1.11.1.-" evidence="1"/>
<dbReference type="EMBL" id="AB271145">
    <property type="protein sequence ID" value="BAF03580.1"/>
    <property type="molecule type" value="mRNA"/>
</dbReference>
<dbReference type="SMR" id="Q0KIY7"/>
<dbReference type="GO" id="GO:0070062">
    <property type="term" value="C:extracellular exosome"/>
    <property type="evidence" value="ECO:0007669"/>
    <property type="project" value="TreeGrafter"/>
</dbReference>
<dbReference type="GO" id="GO:0016528">
    <property type="term" value="C:sarcoplasm"/>
    <property type="evidence" value="ECO:0000250"/>
    <property type="project" value="UniProtKB"/>
</dbReference>
<dbReference type="GO" id="GO:0020037">
    <property type="term" value="F:heme binding"/>
    <property type="evidence" value="ECO:0007669"/>
    <property type="project" value="InterPro"/>
</dbReference>
<dbReference type="GO" id="GO:0046872">
    <property type="term" value="F:metal ion binding"/>
    <property type="evidence" value="ECO:0007669"/>
    <property type="project" value="UniProtKB-KW"/>
</dbReference>
<dbReference type="GO" id="GO:0098809">
    <property type="term" value="F:nitrite reductase activity"/>
    <property type="evidence" value="ECO:0000250"/>
    <property type="project" value="UniProtKB"/>
</dbReference>
<dbReference type="GO" id="GO:0019825">
    <property type="term" value="F:oxygen binding"/>
    <property type="evidence" value="ECO:0007669"/>
    <property type="project" value="InterPro"/>
</dbReference>
<dbReference type="GO" id="GO:0005344">
    <property type="term" value="F:oxygen carrier activity"/>
    <property type="evidence" value="ECO:0000250"/>
    <property type="project" value="UniProtKB"/>
</dbReference>
<dbReference type="GO" id="GO:0004601">
    <property type="term" value="F:peroxidase activity"/>
    <property type="evidence" value="ECO:0000250"/>
    <property type="project" value="UniProtKB"/>
</dbReference>
<dbReference type="GO" id="GO:0019430">
    <property type="term" value="P:removal of superoxide radicals"/>
    <property type="evidence" value="ECO:0000250"/>
    <property type="project" value="UniProtKB"/>
</dbReference>
<dbReference type="CDD" id="cd08926">
    <property type="entry name" value="Mb"/>
    <property type="match status" value="1"/>
</dbReference>
<dbReference type="Gene3D" id="6.10.140.2100">
    <property type="match status" value="1"/>
</dbReference>
<dbReference type="Gene3D" id="6.10.140.2110">
    <property type="match status" value="1"/>
</dbReference>
<dbReference type="InterPro" id="IPR000971">
    <property type="entry name" value="Globin"/>
</dbReference>
<dbReference type="InterPro" id="IPR009050">
    <property type="entry name" value="Globin-like_sf"/>
</dbReference>
<dbReference type="InterPro" id="IPR002335">
    <property type="entry name" value="Myoglobin"/>
</dbReference>
<dbReference type="PANTHER" id="PTHR47132">
    <property type="entry name" value="MYOGLOBIN"/>
    <property type="match status" value="1"/>
</dbReference>
<dbReference type="PANTHER" id="PTHR47132:SF1">
    <property type="entry name" value="MYOGLOBIN"/>
    <property type="match status" value="1"/>
</dbReference>
<dbReference type="Pfam" id="PF00042">
    <property type="entry name" value="Globin"/>
    <property type="match status" value="1"/>
</dbReference>
<dbReference type="PRINTS" id="PR00613">
    <property type="entry name" value="MYOGLOBIN"/>
</dbReference>
<dbReference type="SUPFAM" id="SSF46458">
    <property type="entry name" value="Globin-like"/>
    <property type="match status" value="1"/>
</dbReference>
<dbReference type="PROSITE" id="PS01033">
    <property type="entry name" value="GLOBIN"/>
    <property type="match status" value="1"/>
</dbReference>
<organism>
    <name type="scientific">Stenella attenuata</name>
    <name type="common">Pantropical spotted dolphin</name>
    <name type="synonym">Steno attenuatus</name>
    <dbReference type="NCBI Taxonomy" id="9735"/>
    <lineage>
        <taxon>Eukaryota</taxon>
        <taxon>Metazoa</taxon>
        <taxon>Chordata</taxon>
        <taxon>Craniata</taxon>
        <taxon>Vertebrata</taxon>
        <taxon>Euteleostomi</taxon>
        <taxon>Mammalia</taxon>
        <taxon>Eutheria</taxon>
        <taxon>Laurasiatheria</taxon>
        <taxon>Artiodactyla</taxon>
        <taxon>Whippomorpha</taxon>
        <taxon>Cetacea</taxon>
        <taxon>Odontoceti</taxon>
        <taxon>Delphinidae</taxon>
        <taxon>Stenella</taxon>
    </lineage>
</organism>
<gene>
    <name type="primary">MB1</name>
</gene>
<comment type="function">
    <text evidence="1">Monomeric heme protein which primary function is to store oxygen and facilitate its diffusion within muscle tissues. Reversibly binds oxygen through a pentacoordinated heme iron and enables its timely and efficient release as needed during periods of heightened demand. Depending on the oxidative conditions of tissues and cells, and in addition to its ability to bind oxygen, it also has a nitrite reductase activity whereby it regulates the production of bioactive nitric oxide. Under stress conditions, like hypoxia and anoxia, it also protects cells against reactive oxygen species thanks to its pseudoperoxidase activity.</text>
</comment>
<comment type="catalytic activity">
    <reaction evidence="1">
        <text>Fe(III)-heme b-[protein] + nitric oxide + H2O = Fe(II)-heme b-[protein] + nitrite + 2 H(+)</text>
        <dbReference type="Rhea" id="RHEA:77711"/>
        <dbReference type="Rhea" id="RHEA-COMP:18975"/>
        <dbReference type="Rhea" id="RHEA-COMP:18976"/>
        <dbReference type="ChEBI" id="CHEBI:15377"/>
        <dbReference type="ChEBI" id="CHEBI:15378"/>
        <dbReference type="ChEBI" id="CHEBI:16301"/>
        <dbReference type="ChEBI" id="CHEBI:16480"/>
        <dbReference type="ChEBI" id="CHEBI:55376"/>
        <dbReference type="ChEBI" id="CHEBI:60344"/>
    </reaction>
    <physiologicalReaction direction="right-to-left" evidence="1">
        <dbReference type="Rhea" id="RHEA:77713"/>
    </physiologicalReaction>
</comment>
<comment type="catalytic activity">
    <reaction evidence="1">
        <text>H2O2 + AH2 = A + 2 H2O</text>
        <dbReference type="Rhea" id="RHEA:30275"/>
        <dbReference type="ChEBI" id="CHEBI:13193"/>
        <dbReference type="ChEBI" id="CHEBI:15377"/>
        <dbReference type="ChEBI" id="CHEBI:16240"/>
        <dbReference type="ChEBI" id="CHEBI:17499"/>
    </reaction>
</comment>
<comment type="subunit">
    <text evidence="2">Monomeric.</text>
</comment>
<comment type="subcellular location">
    <subcellularLocation>
        <location evidence="1">Cytoplasm</location>
        <location evidence="1">Sarcoplasm</location>
    </subcellularLocation>
</comment>
<comment type="similarity">
    <text evidence="5">Belongs to the globin family.</text>
</comment>
<reference key="1">
    <citation type="journal article" date="2006" name="Comp. Biochem. Physiol.">
        <title>cDNA-derived amino acid sequences of myoglobins from nine species of whales and dolphins.</title>
        <authorList>
            <person name="Iwanami K."/>
            <person name="Mita H."/>
            <person name="Yamamoto Y."/>
            <person name="Fujise Y."/>
            <person name="Yamada T."/>
            <person name="Suzuki T."/>
        </authorList>
    </citation>
    <scope>NUCLEOTIDE SEQUENCE [MRNA]</scope>
</reference>
<evidence type="ECO:0000250" key="1">
    <source>
        <dbReference type="UniProtKB" id="P02144"/>
    </source>
</evidence>
<evidence type="ECO:0000250" key="2">
    <source>
        <dbReference type="UniProtKB" id="P02185"/>
    </source>
</evidence>
<evidence type="ECO:0000250" key="3">
    <source>
        <dbReference type="UniProtKB" id="P02189"/>
    </source>
</evidence>
<evidence type="ECO:0000250" key="4">
    <source>
        <dbReference type="UniProtKB" id="P68082"/>
    </source>
</evidence>
<evidence type="ECO:0000255" key="5">
    <source>
        <dbReference type="PROSITE-ProRule" id="PRU00238"/>
    </source>
</evidence>
<accession>Q0KIY7</accession>
<feature type="chain" id="PRO_0000261583" description="Myoglobin-1">
    <location>
        <begin position="1"/>
        <end position="154"/>
    </location>
</feature>
<feature type="domain" description="Globin" evidence="5">
    <location>
        <begin position="2"/>
        <end position="148"/>
    </location>
</feature>
<feature type="binding site" evidence="4">
    <location>
        <position position="65"/>
    </location>
    <ligand>
        <name>nitrite</name>
        <dbReference type="ChEBI" id="CHEBI:16301"/>
    </ligand>
</feature>
<feature type="binding site" evidence="3 5">
    <location>
        <position position="65"/>
    </location>
    <ligand>
        <name>O2</name>
        <dbReference type="ChEBI" id="CHEBI:15379"/>
    </ligand>
</feature>
<feature type="binding site" description="proximal binding residue" evidence="1">
    <location>
        <position position="94"/>
    </location>
    <ligand>
        <name>heme b</name>
        <dbReference type="ChEBI" id="CHEBI:60344"/>
    </ligand>
    <ligandPart>
        <name>Fe</name>
        <dbReference type="ChEBI" id="CHEBI:18248"/>
    </ligandPart>
</feature>
<protein>
    <recommendedName>
        <fullName>Myoglobin-1</fullName>
    </recommendedName>
    <alternativeName>
        <fullName evidence="1">Nitrite reductase MB</fullName>
        <ecNumber evidence="1">1.7.-.-</ecNumber>
    </alternativeName>
    <alternativeName>
        <fullName evidence="1">Pseudoperoxidase MB</fullName>
        <ecNumber evidence="1">1.11.1.-</ecNumber>
    </alternativeName>
</protein>
<keyword id="KW-0963">Cytoplasm</keyword>
<keyword id="KW-0349">Heme</keyword>
<keyword id="KW-0408">Iron</keyword>
<keyword id="KW-0479">Metal-binding</keyword>
<keyword id="KW-0514">Muscle protein</keyword>
<keyword id="KW-0560">Oxidoreductase</keyword>
<keyword id="KW-0561">Oxygen transport</keyword>
<keyword id="KW-0813">Transport</keyword>
<proteinExistence type="evidence at transcript level"/>
<sequence length="154" mass="17188">MGLSDGEWQLVLNVWGKVEADLAGHGQDVLIRLFKGHPETLEKFDKFKHLKTEADMKASEDLKKHGNTVLTALGAILKKKGHHDAELKPLAQSHATKHKIPIKYLEFISEAIIHVLHSRHPAEFGADAQGAMNKALELFRKDIAAKYKELGFHG</sequence>